<dbReference type="EMBL" id="BA000030">
    <property type="protein sequence ID" value="BAC70377.1"/>
    <property type="molecule type" value="Genomic_DNA"/>
</dbReference>
<dbReference type="RefSeq" id="WP_007493396.1">
    <property type="nucleotide sequence ID" value="NZ_JZJK01000071.1"/>
</dbReference>
<dbReference type="SMR" id="Q82JT8"/>
<dbReference type="GeneID" id="96294663"/>
<dbReference type="KEGG" id="sma:SAVERM_2666"/>
<dbReference type="eggNOG" id="COG0333">
    <property type="taxonomic scope" value="Bacteria"/>
</dbReference>
<dbReference type="HOGENOM" id="CLU_129084_1_1_11"/>
<dbReference type="OrthoDB" id="9807363at2"/>
<dbReference type="Proteomes" id="UP000000428">
    <property type="component" value="Chromosome"/>
</dbReference>
<dbReference type="GO" id="GO:0015934">
    <property type="term" value="C:large ribosomal subunit"/>
    <property type="evidence" value="ECO:0007669"/>
    <property type="project" value="InterPro"/>
</dbReference>
<dbReference type="GO" id="GO:0003735">
    <property type="term" value="F:structural constituent of ribosome"/>
    <property type="evidence" value="ECO:0007669"/>
    <property type="project" value="InterPro"/>
</dbReference>
<dbReference type="GO" id="GO:0006412">
    <property type="term" value="P:translation"/>
    <property type="evidence" value="ECO:0007669"/>
    <property type="project" value="UniProtKB-UniRule"/>
</dbReference>
<dbReference type="HAMAP" id="MF_00340">
    <property type="entry name" value="Ribosomal_bL32"/>
    <property type="match status" value="1"/>
</dbReference>
<dbReference type="InterPro" id="IPR002677">
    <property type="entry name" value="Ribosomal_bL32"/>
</dbReference>
<dbReference type="InterPro" id="IPR044957">
    <property type="entry name" value="Ribosomal_bL32_bact"/>
</dbReference>
<dbReference type="InterPro" id="IPR011332">
    <property type="entry name" value="Ribosomal_zn-bd"/>
</dbReference>
<dbReference type="NCBIfam" id="TIGR01031">
    <property type="entry name" value="rpmF_bact"/>
    <property type="match status" value="1"/>
</dbReference>
<dbReference type="PANTHER" id="PTHR35534">
    <property type="entry name" value="50S RIBOSOMAL PROTEIN L32"/>
    <property type="match status" value="1"/>
</dbReference>
<dbReference type="PANTHER" id="PTHR35534:SF1">
    <property type="entry name" value="LARGE RIBOSOMAL SUBUNIT PROTEIN BL32"/>
    <property type="match status" value="1"/>
</dbReference>
<dbReference type="Pfam" id="PF01783">
    <property type="entry name" value="Ribosomal_L32p"/>
    <property type="match status" value="1"/>
</dbReference>
<dbReference type="SUPFAM" id="SSF57829">
    <property type="entry name" value="Zn-binding ribosomal proteins"/>
    <property type="match status" value="1"/>
</dbReference>
<proteinExistence type="inferred from homology"/>
<sequence>MAVPKRKMSRSNTRHRRSQWKAAVPTLVACERCHEPKLQHIACPSCGTYNKRQVLEV</sequence>
<protein>
    <recommendedName>
        <fullName evidence="1">Large ribosomal subunit protein bL32</fullName>
    </recommendedName>
    <alternativeName>
        <fullName evidence="2">50S ribosomal protein L32</fullName>
    </alternativeName>
</protein>
<organism>
    <name type="scientific">Streptomyces avermitilis (strain ATCC 31267 / DSM 46492 / JCM 5070 / NBRC 14893 / NCIMB 12804 / NRRL 8165 / MA-4680)</name>
    <dbReference type="NCBI Taxonomy" id="227882"/>
    <lineage>
        <taxon>Bacteria</taxon>
        <taxon>Bacillati</taxon>
        <taxon>Actinomycetota</taxon>
        <taxon>Actinomycetes</taxon>
        <taxon>Kitasatosporales</taxon>
        <taxon>Streptomycetaceae</taxon>
        <taxon>Streptomyces</taxon>
    </lineage>
</organism>
<reference key="1">
    <citation type="journal article" date="2001" name="Proc. Natl. Acad. Sci. U.S.A.">
        <title>Genome sequence of an industrial microorganism Streptomyces avermitilis: deducing the ability of producing secondary metabolites.</title>
        <authorList>
            <person name="Omura S."/>
            <person name="Ikeda H."/>
            <person name="Ishikawa J."/>
            <person name="Hanamoto A."/>
            <person name="Takahashi C."/>
            <person name="Shinose M."/>
            <person name="Takahashi Y."/>
            <person name="Horikawa H."/>
            <person name="Nakazawa H."/>
            <person name="Osonoe T."/>
            <person name="Kikuchi H."/>
            <person name="Shiba T."/>
            <person name="Sakaki Y."/>
            <person name="Hattori M."/>
        </authorList>
    </citation>
    <scope>NUCLEOTIDE SEQUENCE [LARGE SCALE GENOMIC DNA]</scope>
    <source>
        <strain>ATCC 31267 / DSM 46492 / JCM 5070 / NBRC 14893 / NCIMB 12804 / NRRL 8165 / MA-4680</strain>
    </source>
</reference>
<reference key="2">
    <citation type="journal article" date="2003" name="Nat. Biotechnol.">
        <title>Complete genome sequence and comparative analysis of the industrial microorganism Streptomyces avermitilis.</title>
        <authorList>
            <person name="Ikeda H."/>
            <person name="Ishikawa J."/>
            <person name="Hanamoto A."/>
            <person name="Shinose M."/>
            <person name="Kikuchi H."/>
            <person name="Shiba T."/>
            <person name="Sakaki Y."/>
            <person name="Hattori M."/>
            <person name="Omura S."/>
        </authorList>
    </citation>
    <scope>NUCLEOTIDE SEQUENCE [LARGE SCALE GENOMIC DNA]</scope>
    <source>
        <strain>ATCC 31267 / DSM 46492 / JCM 5070 / NBRC 14893 / NCIMB 12804 / NRRL 8165 / MA-4680</strain>
    </source>
</reference>
<name>RL32_STRAW</name>
<feature type="chain" id="PRO_0000172411" description="Large ribosomal subunit protein bL32">
    <location>
        <begin position="1"/>
        <end position="57"/>
    </location>
</feature>
<comment type="similarity">
    <text evidence="1">Belongs to the bacterial ribosomal protein bL32 family.</text>
</comment>
<gene>
    <name evidence="1" type="primary">rpmF</name>
    <name type="ordered locus">SAV_2666</name>
</gene>
<evidence type="ECO:0000255" key="1">
    <source>
        <dbReference type="HAMAP-Rule" id="MF_00340"/>
    </source>
</evidence>
<evidence type="ECO:0000305" key="2"/>
<keyword id="KW-1185">Reference proteome</keyword>
<keyword id="KW-0687">Ribonucleoprotein</keyword>
<keyword id="KW-0689">Ribosomal protein</keyword>
<accession>Q82JT8</accession>